<keyword id="KW-1185">Reference proteome</keyword>
<keyword id="KW-0687">Ribonucleoprotein</keyword>
<keyword id="KW-0689">Ribosomal protein</keyword>
<name>RL19_NOCSJ</name>
<reference key="1">
    <citation type="submission" date="2006-12" db="EMBL/GenBank/DDBJ databases">
        <title>Complete sequence of chromosome 1 of Nocardioides sp. JS614.</title>
        <authorList>
            <person name="Copeland A."/>
            <person name="Lucas S."/>
            <person name="Lapidus A."/>
            <person name="Barry K."/>
            <person name="Detter J.C."/>
            <person name="Glavina del Rio T."/>
            <person name="Hammon N."/>
            <person name="Israni S."/>
            <person name="Dalin E."/>
            <person name="Tice H."/>
            <person name="Pitluck S."/>
            <person name="Thompson L.S."/>
            <person name="Brettin T."/>
            <person name="Bruce D."/>
            <person name="Han C."/>
            <person name="Tapia R."/>
            <person name="Schmutz J."/>
            <person name="Larimer F."/>
            <person name="Land M."/>
            <person name="Hauser L."/>
            <person name="Kyrpides N."/>
            <person name="Kim E."/>
            <person name="Mattes T."/>
            <person name="Gossett J."/>
            <person name="Richardson P."/>
        </authorList>
    </citation>
    <scope>NUCLEOTIDE SEQUENCE [LARGE SCALE GENOMIC DNA]</scope>
    <source>
        <strain>ATCC BAA-499 / JS614</strain>
    </source>
</reference>
<gene>
    <name evidence="1" type="primary">rplS</name>
    <name type="ordered locus">Noca_3255</name>
</gene>
<protein>
    <recommendedName>
        <fullName evidence="1">Large ribosomal subunit protein bL19</fullName>
    </recommendedName>
    <alternativeName>
        <fullName evidence="2">50S ribosomal protein L19</fullName>
    </alternativeName>
</protein>
<proteinExistence type="inferred from homology"/>
<feature type="chain" id="PRO_1000049710" description="Large ribosomal subunit protein bL19">
    <location>
        <begin position="1"/>
        <end position="116"/>
    </location>
</feature>
<organism>
    <name type="scientific">Nocardioides sp. (strain ATCC BAA-499 / JS614)</name>
    <dbReference type="NCBI Taxonomy" id="196162"/>
    <lineage>
        <taxon>Bacteria</taxon>
        <taxon>Bacillati</taxon>
        <taxon>Actinomycetota</taxon>
        <taxon>Actinomycetes</taxon>
        <taxon>Propionibacteriales</taxon>
        <taxon>Nocardioidaceae</taxon>
        <taxon>Nocardioides</taxon>
    </lineage>
</organism>
<accession>A1SLS2</accession>
<dbReference type="EMBL" id="CP000509">
    <property type="protein sequence ID" value="ABL82757.1"/>
    <property type="molecule type" value="Genomic_DNA"/>
</dbReference>
<dbReference type="RefSeq" id="WP_011756691.1">
    <property type="nucleotide sequence ID" value="NC_008699.1"/>
</dbReference>
<dbReference type="SMR" id="A1SLS2"/>
<dbReference type="STRING" id="196162.Noca_3255"/>
<dbReference type="KEGG" id="nca:Noca_3255"/>
<dbReference type="eggNOG" id="COG0335">
    <property type="taxonomic scope" value="Bacteria"/>
</dbReference>
<dbReference type="HOGENOM" id="CLU_103507_2_1_11"/>
<dbReference type="OrthoDB" id="9803541at2"/>
<dbReference type="Proteomes" id="UP000000640">
    <property type="component" value="Chromosome"/>
</dbReference>
<dbReference type="GO" id="GO:0022625">
    <property type="term" value="C:cytosolic large ribosomal subunit"/>
    <property type="evidence" value="ECO:0007669"/>
    <property type="project" value="TreeGrafter"/>
</dbReference>
<dbReference type="GO" id="GO:0003735">
    <property type="term" value="F:structural constituent of ribosome"/>
    <property type="evidence" value="ECO:0007669"/>
    <property type="project" value="InterPro"/>
</dbReference>
<dbReference type="GO" id="GO:0006412">
    <property type="term" value="P:translation"/>
    <property type="evidence" value="ECO:0007669"/>
    <property type="project" value="UniProtKB-UniRule"/>
</dbReference>
<dbReference type="FunFam" id="2.30.30.790:FF:000001">
    <property type="entry name" value="50S ribosomal protein L19"/>
    <property type="match status" value="1"/>
</dbReference>
<dbReference type="Gene3D" id="2.30.30.790">
    <property type="match status" value="1"/>
</dbReference>
<dbReference type="HAMAP" id="MF_00402">
    <property type="entry name" value="Ribosomal_bL19"/>
    <property type="match status" value="1"/>
</dbReference>
<dbReference type="InterPro" id="IPR001857">
    <property type="entry name" value="Ribosomal_bL19"/>
</dbReference>
<dbReference type="InterPro" id="IPR018257">
    <property type="entry name" value="Ribosomal_bL19_CS"/>
</dbReference>
<dbReference type="InterPro" id="IPR038657">
    <property type="entry name" value="Ribosomal_bL19_sf"/>
</dbReference>
<dbReference type="InterPro" id="IPR008991">
    <property type="entry name" value="Translation_prot_SH3-like_sf"/>
</dbReference>
<dbReference type="NCBIfam" id="TIGR01024">
    <property type="entry name" value="rplS_bact"/>
    <property type="match status" value="1"/>
</dbReference>
<dbReference type="PANTHER" id="PTHR15680:SF9">
    <property type="entry name" value="LARGE RIBOSOMAL SUBUNIT PROTEIN BL19M"/>
    <property type="match status" value="1"/>
</dbReference>
<dbReference type="PANTHER" id="PTHR15680">
    <property type="entry name" value="RIBOSOMAL PROTEIN L19"/>
    <property type="match status" value="1"/>
</dbReference>
<dbReference type="Pfam" id="PF01245">
    <property type="entry name" value="Ribosomal_L19"/>
    <property type="match status" value="1"/>
</dbReference>
<dbReference type="PIRSF" id="PIRSF002191">
    <property type="entry name" value="Ribosomal_L19"/>
    <property type="match status" value="1"/>
</dbReference>
<dbReference type="PRINTS" id="PR00061">
    <property type="entry name" value="RIBOSOMALL19"/>
</dbReference>
<dbReference type="SUPFAM" id="SSF50104">
    <property type="entry name" value="Translation proteins SH3-like domain"/>
    <property type="match status" value="1"/>
</dbReference>
<dbReference type="PROSITE" id="PS01015">
    <property type="entry name" value="RIBOSOMAL_L19"/>
    <property type="match status" value="1"/>
</dbReference>
<comment type="function">
    <text evidence="1">This protein is located at the 30S-50S ribosomal subunit interface and may play a role in the structure and function of the aminoacyl-tRNA binding site.</text>
</comment>
<comment type="similarity">
    <text evidence="1">Belongs to the bacterial ribosomal protein bL19 family.</text>
</comment>
<evidence type="ECO:0000255" key="1">
    <source>
        <dbReference type="HAMAP-Rule" id="MF_00402"/>
    </source>
</evidence>
<evidence type="ECO:0000305" key="2"/>
<sequence length="116" mass="13109">MSNVIAELGNATKRTDLPDFRSGDTVKVHVKVVEGNRSRVQIFQGVVIRLQGSGVGRSFTVRKVSFGVGVERTFPLHSPIFEQIEVVTRGDVRRAKLYYLRNLRGKKAKIKERREA</sequence>